<keyword id="KW-0002">3D-structure</keyword>
<keyword id="KW-0009">Actin-binding</keyword>
<keyword id="KW-0044">Antibiotic</keyword>
<keyword id="KW-0929">Antimicrobial</keyword>
<keyword id="KW-0053">Apoptosis</keyword>
<keyword id="KW-0903">Direct protein sequencing</keyword>
<keyword id="KW-1015">Disulfide bond</keyword>
<keyword id="KW-0295">Fungicide</keyword>
<keyword id="KW-0430">Lectin</keyword>
<keyword id="KW-0465">Mannose-binding</keyword>
<keyword id="KW-0611">Plant defense</keyword>
<keyword id="KW-0964">Secreted</keyword>
<keyword id="KW-0732">Signal</keyword>
<reference key="1">
    <citation type="journal article" date="2007" name="Biol. Chem.">
        <title>Purification, characterization, and molecular gene cloning of an antifungal protein from Ginkgo biloba seeds.</title>
        <authorList>
            <person name="Sawano Y."/>
            <person name="Miyakawa T."/>
            <person name="Yamazaki H."/>
            <person name="Tanokura M."/>
            <person name="Hatano K."/>
        </authorList>
    </citation>
    <scope>NUCLEOTIDE SEQUENCE [MRNA]</scope>
    <scope>PROTEIN SEQUENCE OF 27-56</scope>
    <scope>IDENTIFICATION BY MASS SPECTROMETRY</scope>
    <scope>FUNCTION</scope>
    <source>
        <tissue>Seed</tissue>
    </source>
</reference>
<reference key="2">
    <citation type="submission" date="2009-03" db="EMBL/GenBank/DDBJ databases">
        <title>Isolation and functional characterization of Ginkgo biloba antimicrobial protein gene and its promoter.</title>
        <authorList>
            <person name="Liu J."/>
            <person name="Wang Y.H."/>
            <person name="Wang Q."/>
            <person name="Tian H.L."/>
            <person name="Guo A.G."/>
        </authorList>
    </citation>
    <scope>NUCLEOTIDE SEQUENCE [GENOMIC DNA / MRNA]</scope>
    <source>
        <tissue evidence="9">Seed</tissue>
    </source>
</reference>
<reference key="3">
    <citation type="journal article" date="2016" name="Protoplasma">
        <title>An antifungal protein from Ginkgo biloba binds actin and can trigger cell death.</title>
        <authorList>
            <person name="Gao N."/>
            <person name="Wadhwani P."/>
            <person name="Muehlhaeuser P."/>
            <person name="Liu Q."/>
            <person name="Riemann M."/>
            <person name="Ulrich A.S."/>
            <person name="Nick P."/>
        </authorList>
    </citation>
    <scope>SUBCELLULAR LOCATION</scope>
    <scope>FUNCTION</scope>
    <scope>SUBUNIT</scope>
</reference>
<reference key="4">
    <citation type="journal article" date="2007" name="Acta Crystallogr. F">
        <title>Crystallization and preliminary X-ray analysis of ginkbilobin-2 from Ginkgo biloba seeds: a novel antifungal protein with homology to the extracellular domain of plant cysteine-rich receptor-like kinases.</title>
        <authorList>
            <person name="Miyakawa T."/>
            <person name="Sawano Y."/>
            <person name="Miyazono K."/>
            <person name="Hatano K."/>
            <person name="Tanokura M."/>
        </authorList>
    </citation>
    <scope>X-RAY CRYSTALLOGRAPHY (2.38 ANGSTROMS) OF 27-134</scope>
</reference>
<reference key="5">
    <citation type="journal article" date="2007" name="Acta Crystallogr. F">
        <authorList>
            <person name="Miyakawa T."/>
            <person name="Sawano Y."/>
            <person name="Miyazono K."/>
            <person name="Hatano K."/>
            <person name="Tanokura M."/>
        </authorList>
    </citation>
    <scope>ERRATUM OF PUBMED:17768341</scope>
</reference>
<reference key="6">
    <citation type="journal article" date="2009" name="Proteins">
        <title>Crystal structure of ginkbilobin-2 with homology to the extracellular domain of plant cysteine-rich receptor-like kinases.</title>
        <authorList>
            <person name="Miyakawa T."/>
            <person name="Miyazono K."/>
            <person name="Sawano Y."/>
            <person name="Hatano K."/>
            <person name="Tanokura M."/>
        </authorList>
    </citation>
    <scope>X-RAY CRYSTALLOGRAPHY (2.38 ANGSTROMS) OF 27-134</scope>
    <scope>DISULFIDE BONDS</scope>
</reference>
<reference key="7">
    <citation type="journal article" date="2014" name="Plant Physiol.">
        <title>A secreted protein with plant-specific cysteine-rich motif functions as a mannose-binding lectin that exhibits antifungal activity.</title>
        <authorList>
            <person name="Miyakawa T."/>
            <person name="Hatano K."/>
            <person name="Miyauchi Y."/>
            <person name="Suwa Y."/>
            <person name="Sawano Y."/>
            <person name="Tanokura M."/>
        </authorList>
    </citation>
    <scope>X-RAY CRYSTALLOGRAPHY (2.60 ANGSTROMS) OF 27-134 IN COMPLEX WITH MANNOSE</scope>
    <scope>FUNCTION</scope>
    <scope>DISULFIDE BONDS</scope>
    <scope>MUTAGENESIS OF ARG-119</scope>
</reference>
<reference key="8">
    <citation type="journal article" date="2015" name="Plant Physiol.">
        <authorList>
            <person name="Miyakawa T."/>
            <person name="Hatano K."/>
            <person name="Miyauchi Y."/>
            <person name="Suwa Y."/>
            <person name="Sawano Y."/>
            <person name="Tanokura M."/>
        </authorList>
    </citation>
    <scope>ERRATUM OF PUBMED:25139159</scope>
</reference>
<proteinExistence type="evidence at protein level"/>
<dbReference type="EMBL" id="DQ496113">
    <property type="protein sequence ID" value="ABF55255.1"/>
    <property type="molecule type" value="mRNA"/>
</dbReference>
<dbReference type="EMBL" id="FJ822053">
    <property type="protein sequence ID" value="ACZ57929.1"/>
    <property type="molecule type" value="Genomic_DNA"/>
</dbReference>
<dbReference type="EMBL" id="FJ865399">
    <property type="protein sequence ID" value="ACP27608.1"/>
    <property type="molecule type" value="mRNA"/>
</dbReference>
<dbReference type="PDB" id="3A2E">
    <property type="method" value="X-ray"/>
    <property type="resolution" value="2.38 A"/>
    <property type="chains" value="A/B/C/D=27-134"/>
</dbReference>
<dbReference type="PDB" id="4XRE">
    <property type="method" value="X-ray"/>
    <property type="resolution" value="2.60 A"/>
    <property type="chains" value="A/B/C/D=27-134"/>
</dbReference>
<dbReference type="PDBsum" id="3A2E"/>
<dbReference type="PDBsum" id="4XRE"/>
<dbReference type="BMRB" id="A4ZDL6"/>
<dbReference type="SMR" id="A4ZDL6"/>
<dbReference type="UniLectin" id="A4ZDL6"/>
<dbReference type="OMA" id="IFCSAFR"/>
<dbReference type="EvolutionaryTrace" id="A4ZDL6"/>
<dbReference type="GO" id="GO:0005615">
    <property type="term" value="C:extracellular space"/>
    <property type="evidence" value="ECO:0000314"/>
    <property type="project" value="UniProtKB"/>
</dbReference>
<dbReference type="GO" id="GO:0003779">
    <property type="term" value="F:actin binding"/>
    <property type="evidence" value="ECO:0000314"/>
    <property type="project" value="UniProtKB"/>
</dbReference>
<dbReference type="GO" id="GO:0019828">
    <property type="term" value="F:aspartic-type endopeptidase inhibitor activity"/>
    <property type="evidence" value="ECO:0000314"/>
    <property type="project" value="UniProtKB"/>
</dbReference>
<dbReference type="GO" id="GO:0005537">
    <property type="term" value="F:D-mannose binding"/>
    <property type="evidence" value="ECO:0000314"/>
    <property type="project" value="UniProtKB"/>
</dbReference>
<dbReference type="GO" id="GO:0042742">
    <property type="term" value="P:defense response to bacterium"/>
    <property type="evidence" value="ECO:0007669"/>
    <property type="project" value="UniProtKB-KW"/>
</dbReference>
<dbReference type="GO" id="GO:0050832">
    <property type="term" value="P:defense response to fungus"/>
    <property type="evidence" value="ECO:0000314"/>
    <property type="project" value="UniProtKB"/>
</dbReference>
<dbReference type="GO" id="GO:0012502">
    <property type="term" value="P:induction of programmed cell death"/>
    <property type="evidence" value="ECO:0000303"/>
    <property type="project" value="UniProtKB"/>
</dbReference>
<dbReference type="GO" id="GO:0031640">
    <property type="term" value="P:killing of cells of another organism"/>
    <property type="evidence" value="ECO:0007669"/>
    <property type="project" value="UniProtKB-KW"/>
</dbReference>
<dbReference type="CDD" id="cd23509">
    <property type="entry name" value="Gnk2-like"/>
    <property type="match status" value="1"/>
</dbReference>
<dbReference type="FunFam" id="3.30.430.20:FF:000039">
    <property type="entry name" value="Antifungal protein ginkbilobin-2"/>
    <property type="match status" value="1"/>
</dbReference>
<dbReference type="Gene3D" id="3.30.430.20">
    <property type="entry name" value="Gnk2 domain, C-X8-C-X2-C motif"/>
    <property type="match status" value="1"/>
</dbReference>
<dbReference type="InterPro" id="IPR051378">
    <property type="entry name" value="Cell2Cell_Antifungal"/>
</dbReference>
<dbReference type="InterPro" id="IPR002902">
    <property type="entry name" value="GNK2"/>
</dbReference>
<dbReference type="InterPro" id="IPR038408">
    <property type="entry name" value="GNK2_sf"/>
</dbReference>
<dbReference type="PANTHER" id="PTHR32080">
    <property type="entry name" value="ANTIFUNGAL PROTEIN GINKBILOBIN-2-LIKE"/>
    <property type="match status" value="1"/>
</dbReference>
<dbReference type="PANTHER" id="PTHR32080:SF54">
    <property type="entry name" value="GNK2-HOMOLOGOUS DOMAIN-CONTAINING PROTEIN"/>
    <property type="match status" value="1"/>
</dbReference>
<dbReference type="Pfam" id="PF01657">
    <property type="entry name" value="Stress-antifung"/>
    <property type="match status" value="1"/>
</dbReference>
<dbReference type="PROSITE" id="PS51473">
    <property type="entry name" value="GNK2"/>
    <property type="match status" value="1"/>
</dbReference>
<evidence type="ECO:0000255" key="1"/>
<evidence type="ECO:0000255" key="2">
    <source>
        <dbReference type="PROSITE-ProRule" id="PRU00806"/>
    </source>
</evidence>
<evidence type="ECO:0000269" key="3">
    <source>
    </source>
</evidence>
<evidence type="ECO:0000269" key="4">
    <source>
    </source>
</evidence>
<evidence type="ECO:0000269" key="5">
    <source>
    </source>
</evidence>
<evidence type="ECO:0000269" key="6">
    <source>
    </source>
</evidence>
<evidence type="ECO:0000303" key="7">
    <source>
    </source>
</evidence>
<evidence type="ECO:0000305" key="8"/>
<evidence type="ECO:0000312" key="9">
    <source>
        <dbReference type="EMBL" id="ACP27608.1"/>
    </source>
</evidence>
<evidence type="ECO:0007744" key="10">
    <source>
        <dbReference type="PDB" id="3A2E"/>
    </source>
</evidence>
<evidence type="ECO:0007744" key="11">
    <source>
        <dbReference type="PDB" id="4XRE"/>
    </source>
</evidence>
<evidence type="ECO:0007829" key="12">
    <source>
        <dbReference type="PDB" id="3A2E"/>
    </source>
</evidence>
<feature type="signal peptide" evidence="1">
    <location>
        <begin position="1"/>
        <end position="26"/>
    </location>
</feature>
<feature type="chain" id="PRO_5000242182" description="Antifungal protein ginkbilobin-2">
    <location>
        <begin position="27"/>
        <end position="134"/>
    </location>
</feature>
<feature type="domain" description="Gnk2-homologous" evidence="2">
    <location>
        <begin position="29"/>
        <end position="134"/>
    </location>
</feature>
<feature type="binding site" evidence="11">
    <location>
        <position position="37"/>
    </location>
    <ligand>
        <name>alpha-D-mannopyranose</name>
        <dbReference type="ChEBI" id="CHEBI:28729"/>
    </ligand>
</feature>
<feature type="binding site" evidence="11">
    <location>
        <position position="119"/>
    </location>
    <ligand>
        <name>alpha-D-mannopyranose</name>
        <dbReference type="ChEBI" id="CHEBI:28729"/>
    </ligand>
</feature>
<feature type="binding site" evidence="11">
    <location>
        <position position="130"/>
    </location>
    <ligand>
        <name>alpha-D-mannopyranose</name>
        <dbReference type="ChEBI" id="CHEBI:28729"/>
    </ligand>
</feature>
<feature type="disulfide bond" evidence="2 4 10 11">
    <location>
        <begin position="36"/>
        <end position="112"/>
    </location>
</feature>
<feature type="disulfide bond" evidence="2 4 10 11">
    <location>
        <begin position="88"/>
        <end position="97"/>
    </location>
</feature>
<feature type="disulfide bond" evidence="2 4 10 11">
    <location>
        <begin position="100"/>
        <end position="125"/>
    </location>
</feature>
<feature type="mutagenesis site" description="Abolishes binding to yeast mannan." evidence="5">
    <original>R</original>
    <variation>A</variation>
    <location>
        <position position="119"/>
    </location>
</feature>
<feature type="sequence conflict" description="In Ref. 2; ACP27608." evidence="8" ref="2">
    <original>A</original>
    <variation>N</variation>
    <location>
        <position position="30"/>
    </location>
</feature>
<feature type="sequence conflict" description="In Ref. 2; ACP27608." evidence="8" ref="2">
    <original>R</original>
    <variation>K</variation>
    <location>
        <position position="59"/>
    </location>
</feature>
<feature type="strand" evidence="12">
    <location>
        <begin position="31"/>
        <end position="36"/>
    </location>
</feature>
<feature type="strand" evidence="12">
    <location>
        <begin position="38"/>
        <end position="40"/>
    </location>
</feature>
<feature type="helix" evidence="12">
    <location>
        <begin position="47"/>
        <end position="61"/>
    </location>
</feature>
<feature type="helix" evidence="12">
    <location>
        <begin position="62"/>
        <end position="64"/>
    </location>
</feature>
<feature type="strand" evidence="12">
    <location>
        <begin position="67"/>
        <end position="73"/>
    </location>
</feature>
<feature type="strand" evidence="12">
    <location>
        <begin position="82"/>
        <end position="88"/>
    </location>
</feature>
<feature type="helix" evidence="12">
    <location>
        <begin position="94"/>
        <end position="105"/>
    </location>
</feature>
<feature type="helix" evidence="12">
    <location>
        <begin position="108"/>
        <end position="111"/>
    </location>
</feature>
<feature type="strand" evidence="12">
    <location>
        <begin position="114"/>
        <end position="122"/>
    </location>
</feature>
<feature type="strand" evidence="12">
    <location>
        <begin position="125"/>
        <end position="132"/>
    </location>
</feature>
<comment type="function">
    <text evidence="3 5 6">Possesses antifungal activity against F.oxysporum, T.reesei and C.albicans. Weakly inhibits the aspartic acid protease pepsin activity (PubMed:17338634). Exerts antifungal activity against S.cerevisiae and F.culmorum through its carbohydrate-binding specificity. Acts as a lectin that stricly recognizes alpha-1,2-linked mannose moieties and interacts with the yeast cell wall mannan polysaccharide (PubMed:25139159). Can interfere with the fungal actin remodeling resulting to the activation of an actin-dependent cell death (PubMed:26315821).</text>
</comment>
<comment type="subunit">
    <text evidence="6">Binds actin in vitro.</text>
</comment>
<comment type="subcellular location">
    <subcellularLocation>
        <location evidence="6">Secreted</location>
    </subcellularLocation>
</comment>
<sequence>MKTMRMNSAFILAFALAAAMLILTEAANTAFVSSACNTQKIPSGSPFNRNLRAMLADLRQNTAFSGYDYKTSRAGSGGAPTAYGRATCKQSISQSDCTACLSNLVNRIFSICNNAIGARVQLVDCFIQYEQRSF</sequence>
<protein>
    <recommendedName>
        <fullName evidence="7">Antifungal protein ginkbilobin-2</fullName>
    </recommendedName>
    <alternativeName>
        <fullName evidence="9">Antimicrobial protein Gnk2-1</fullName>
    </alternativeName>
</protein>
<accession>A4ZDL6</accession>
<accession>C3VHZ7</accession>
<accession>F2Q6K2</accession>
<organism>
    <name type="scientific">Ginkgo biloba</name>
    <name type="common">Ginkgo</name>
    <name type="synonym">Maidenhair tree</name>
    <dbReference type="NCBI Taxonomy" id="3311"/>
    <lineage>
        <taxon>Eukaryota</taxon>
        <taxon>Viridiplantae</taxon>
        <taxon>Streptophyta</taxon>
        <taxon>Embryophyta</taxon>
        <taxon>Tracheophyta</taxon>
        <taxon>Spermatophyta</taxon>
        <taxon>Ginkgoidae</taxon>
        <taxon>Ginkgoales</taxon>
        <taxon>Ginkgoaceae</taxon>
        <taxon>Ginkgo</taxon>
    </lineage>
</organism>
<gene>
    <name evidence="8" type="primary">GNK2</name>
    <name evidence="9" type="synonym">GNK2-1</name>
</gene>
<name>GNK2_GINBI</name>